<sequence length="738" mass="84577">MDPFFLNTQHVELLVSGKQSSPQDLLGIVSESLNQDRIVLFRPGAETVFVELRGKIQQAESHHSGIFSLPVMKGISPQDYRVYHQNGLLAHDPYAFPLLWGEIDSFLFHEGTHQRIYERMGAIPCEIDGVPGVRFIVWAPHAQRVSVIGDFNGWHGLVNPLHKVSDQGVWELFVPGLTAGACYKWEMVTESGQVLIKSDPYGKFFGPPPRSVSVVIDDSYEWNDSEWLEERIKKTEGPMNIYEVHVGSWQWQEGQPLNYKELADQLALYCKQMHYTHVELLPVTEHPLNESWGYQTTGYYAPTSRYGSFEDLQYFIDTMHQHGIGVILDWVPGHFPIDSFAMSGFDGTPLYEYTRNPSPLHPHWHTYTFDYAKPEVCNFLLGSALFWIDKMHVDGIRVDAVSSMLYLDYGRYAGEWVPNRYGGRENLDAIRFLQQFNTVIHEKYPGVLTFAEESTTFPKITVSVEEGGLGFDYKWNMGWMHDTLHYFEKDFPYRPYHQSDLTFPQWYAFSERFLLPFSHDEVVHGKRSLIGKMPGDAWRQFAQLRLLLGYQICQPGKKLLFMGGEFGQGREWSPGRELDWELLDISYHQGVHLCSQELNALYVQSPQLWQADHLPSSFRWVDFSDVRNGVVAYLRFADADAKKALLCVHHFGVGYFPHYLLPILPLESCDLLMNTDNTRFGGSGKGFREPEILTPEIARQEREAAGLIEADDESGPDCWGLDIELPPSATLIFSVTLQ</sequence>
<keyword id="KW-0119">Carbohydrate metabolism</keyword>
<keyword id="KW-0320">Glycogen biosynthesis</keyword>
<keyword id="KW-0321">Glycogen metabolism</keyword>
<keyword id="KW-0328">Glycosyltransferase</keyword>
<keyword id="KW-0808">Transferase</keyword>
<protein>
    <recommendedName>
        <fullName evidence="1">1,4-alpha-glucan branching enzyme GlgB</fullName>
        <ecNumber evidence="1">2.4.1.18</ecNumber>
    </recommendedName>
    <alternativeName>
        <fullName evidence="1">1,4-alpha-D-glucan:1,4-alpha-D-glucan 6-glucosyl-transferase</fullName>
    </alternativeName>
    <alternativeName>
        <fullName evidence="1">Alpha-(1-&gt;4)-glucan branching enzyme</fullName>
    </alternativeName>
    <alternativeName>
        <fullName evidence="1">Glycogen branching enzyme</fullName>
        <shortName evidence="1">BE</shortName>
    </alternativeName>
</protein>
<feature type="chain" id="PRO_1000131813" description="1,4-alpha-glucan branching enzyme GlgB">
    <location>
        <begin position="1"/>
        <end position="738"/>
    </location>
</feature>
<feature type="active site" description="Nucleophile" evidence="1">
    <location>
        <position position="399"/>
    </location>
</feature>
<feature type="active site" description="Proton donor" evidence="1">
    <location>
        <position position="452"/>
    </location>
</feature>
<proteinExistence type="inferred from homology"/>
<gene>
    <name evidence="1" type="primary">glgB</name>
    <name type="ordered locus">CTL0245</name>
</gene>
<evidence type="ECO:0000255" key="1">
    <source>
        <dbReference type="HAMAP-Rule" id="MF_00685"/>
    </source>
</evidence>
<reference key="1">
    <citation type="journal article" date="2008" name="Genome Res.">
        <title>Chlamydia trachomatis: genome sequence analysis of lymphogranuloma venereum isolates.</title>
        <authorList>
            <person name="Thomson N.R."/>
            <person name="Holden M.T.G."/>
            <person name="Carder C."/>
            <person name="Lennard N."/>
            <person name="Lockey S.J."/>
            <person name="Marsh P."/>
            <person name="Skipp P."/>
            <person name="O'Connor C.D."/>
            <person name="Goodhead I."/>
            <person name="Norbertzcak H."/>
            <person name="Harris B."/>
            <person name="Ormond D."/>
            <person name="Rance R."/>
            <person name="Quail M.A."/>
            <person name="Parkhill J."/>
            <person name="Stephens R.S."/>
            <person name="Clarke I.N."/>
        </authorList>
    </citation>
    <scope>NUCLEOTIDE SEQUENCE [LARGE SCALE GENOMIC DNA]</scope>
    <source>
        <strain>ATCC VR-902B / DSM 19102 / 434/Bu</strain>
    </source>
</reference>
<organism>
    <name type="scientific">Chlamydia trachomatis serovar L2 (strain ATCC VR-902B / DSM 19102 / 434/Bu)</name>
    <dbReference type="NCBI Taxonomy" id="471472"/>
    <lineage>
        <taxon>Bacteria</taxon>
        <taxon>Pseudomonadati</taxon>
        <taxon>Chlamydiota</taxon>
        <taxon>Chlamydiia</taxon>
        <taxon>Chlamydiales</taxon>
        <taxon>Chlamydiaceae</taxon>
        <taxon>Chlamydia/Chlamydophila group</taxon>
        <taxon>Chlamydia</taxon>
    </lineage>
</organism>
<name>GLGB_CHLT2</name>
<dbReference type="EC" id="2.4.1.18" evidence="1"/>
<dbReference type="EMBL" id="AM884176">
    <property type="protein sequence ID" value="CAP03685.1"/>
    <property type="molecule type" value="Genomic_DNA"/>
</dbReference>
<dbReference type="RefSeq" id="WP_009873473.1">
    <property type="nucleotide sequence ID" value="NC_010287.1"/>
</dbReference>
<dbReference type="RefSeq" id="YP_001654330.1">
    <property type="nucleotide sequence ID" value="NC_010287.1"/>
</dbReference>
<dbReference type="SMR" id="B0B998"/>
<dbReference type="CAZy" id="CBM48">
    <property type="family name" value="Carbohydrate-Binding Module Family 48"/>
</dbReference>
<dbReference type="CAZy" id="GH13">
    <property type="family name" value="Glycoside Hydrolase Family 13"/>
</dbReference>
<dbReference type="KEGG" id="ctb:CTL0245"/>
<dbReference type="PATRIC" id="fig|471472.4.peg.262"/>
<dbReference type="HOGENOM" id="CLU_004245_3_2_0"/>
<dbReference type="UniPathway" id="UPA00164"/>
<dbReference type="Proteomes" id="UP001154402">
    <property type="component" value="Chromosome"/>
</dbReference>
<dbReference type="GO" id="GO:0005829">
    <property type="term" value="C:cytosol"/>
    <property type="evidence" value="ECO:0007669"/>
    <property type="project" value="TreeGrafter"/>
</dbReference>
<dbReference type="GO" id="GO:0003844">
    <property type="term" value="F:1,4-alpha-glucan branching enzyme activity"/>
    <property type="evidence" value="ECO:0007669"/>
    <property type="project" value="UniProtKB-UniRule"/>
</dbReference>
<dbReference type="GO" id="GO:0043169">
    <property type="term" value="F:cation binding"/>
    <property type="evidence" value="ECO:0007669"/>
    <property type="project" value="InterPro"/>
</dbReference>
<dbReference type="GO" id="GO:0004553">
    <property type="term" value="F:hydrolase activity, hydrolyzing O-glycosyl compounds"/>
    <property type="evidence" value="ECO:0007669"/>
    <property type="project" value="InterPro"/>
</dbReference>
<dbReference type="GO" id="GO:0005978">
    <property type="term" value="P:glycogen biosynthetic process"/>
    <property type="evidence" value="ECO:0007669"/>
    <property type="project" value="UniProtKB-UniRule"/>
</dbReference>
<dbReference type="CDD" id="cd11322">
    <property type="entry name" value="AmyAc_Glg_BE"/>
    <property type="match status" value="1"/>
</dbReference>
<dbReference type="CDD" id="cd02855">
    <property type="entry name" value="E_set_GBE_prok_N"/>
    <property type="match status" value="1"/>
</dbReference>
<dbReference type="FunFam" id="2.60.40.10:FF:000169">
    <property type="entry name" value="1,4-alpha-glucan branching enzyme GlgB"/>
    <property type="match status" value="1"/>
</dbReference>
<dbReference type="FunFam" id="3.20.20.80:FF:000003">
    <property type="entry name" value="1,4-alpha-glucan branching enzyme GlgB"/>
    <property type="match status" value="1"/>
</dbReference>
<dbReference type="Gene3D" id="3.20.20.80">
    <property type="entry name" value="Glycosidases"/>
    <property type="match status" value="1"/>
</dbReference>
<dbReference type="Gene3D" id="2.60.40.1180">
    <property type="entry name" value="Golgi alpha-mannosidase II"/>
    <property type="match status" value="1"/>
</dbReference>
<dbReference type="Gene3D" id="2.60.40.10">
    <property type="entry name" value="Immunoglobulins"/>
    <property type="match status" value="1"/>
</dbReference>
<dbReference type="HAMAP" id="MF_00685">
    <property type="entry name" value="GlgB"/>
    <property type="match status" value="1"/>
</dbReference>
<dbReference type="InterPro" id="IPR006048">
    <property type="entry name" value="A-amylase/branching_C"/>
</dbReference>
<dbReference type="InterPro" id="IPR037439">
    <property type="entry name" value="Branching_enzy"/>
</dbReference>
<dbReference type="InterPro" id="IPR006407">
    <property type="entry name" value="GlgB"/>
</dbReference>
<dbReference type="InterPro" id="IPR044143">
    <property type="entry name" value="GlgB_N_E_set_prok"/>
</dbReference>
<dbReference type="InterPro" id="IPR006047">
    <property type="entry name" value="Glyco_hydro_13_cat_dom"/>
</dbReference>
<dbReference type="InterPro" id="IPR004193">
    <property type="entry name" value="Glyco_hydro_13_N"/>
</dbReference>
<dbReference type="InterPro" id="IPR013780">
    <property type="entry name" value="Glyco_hydro_b"/>
</dbReference>
<dbReference type="InterPro" id="IPR017853">
    <property type="entry name" value="Glycoside_hydrolase_SF"/>
</dbReference>
<dbReference type="InterPro" id="IPR013783">
    <property type="entry name" value="Ig-like_fold"/>
</dbReference>
<dbReference type="InterPro" id="IPR014756">
    <property type="entry name" value="Ig_E-set"/>
</dbReference>
<dbReference type="NCBIfam" id="TIGR01515">
    <property type="entry name" value="branching_enzym"/>
    <property type="match status" value="1"/>
</dbReference>
<dbReference type="NCBIfam" id="NF003811">
    <property type="entry name" value="PRK05402.1"/>
    <property type="match status" value="1"/>
</dbReference>
<dbReference type="NCBIfam" id="NF008967">
    <property type="entry name" value="PRK12313.1"/>
    <property type="match status" value="1"/>
</dbReference>
<dbReference type="PANTHER" id="PTHR43651">
    <property type="entry name" value="1,4-ALPHA-GLUCAN-BRANCHING ENZYME"/>
    <property type="match status" value="1"/>
</dbReference>
<dbReference type="PANTHER" id="PTHR43651:SF3">
    <property type="entry name" value="1,4-ALPHA-GLUCAN-BRANCHING ENZYME"/>
    <property type="match status" value="1"/>
</dbReference>
<dbReference type="Pfam" id="PF00128">
    <property type="entry name" value="Alpha-amylase"/>
    <property type="match status" value="2"/>
</dbReference>
<dbReference type="Pfam" id="PF02806">
    <property type="entry name" value="Alpha-amylase_C"/>
    <property type="match status" value="1"/>
</dbReference>
<dbReference type="Pfam" id="PF02922">
    <property type="entry name" value="CBM_48"/>
    <property type="match status" value="1"/>
</dbReference>
<dbReference type="PIRSF" id="PIRSF000463">
    <property type="entry name" value="GlgB"/>
    <property type="match status" value="1"/>
</dbReference>
<dbReference type="SMART" id="SM00642">
    <property type="entry name" value="Aamy"/>
    <property type="match status" value="1"/>
</dbReference>
<dbReference type="SUPFAM" id="SSF51445">
    <property type="entry name" value="(Trans)glycosidases"/>
    <property type="match status" value="1"/>
</dbReference>
<dbReference type="SUPFAM" id="SSF81296">
    <property type="entry name" value="E set domains"/>
    <property type="match status" value="2"/>
</dbReference>
<dbReference type="SUPFAM" id="SSF51011">
    <property type="entry name" value="Glycosyl hydrolase domain"/>
    <property type="match status" value="1"/>
</dbReference>
<comment type="function">
    <text evidence="1">Catalyzes the formation of the alpha-1,6-glucosidic linkages in glycogen by scission of a 1,4-alpha-linked oligosaccharide from growing alpha-1,4-glucan chains and the subsequent attachment of the oligosaccharide to the alpha-1,6 position.</text>
</comment>
<comment type="catalytic activity">
    <reaction evidence="1">
        <text>Transfers a segment of a (1-&gt;4)-alpha-D-glucan chain to a primary hydroxy group in a similar glucan chain.</text>
        <dbReference type="EC" id="2.4.1.18"/>
    </reaction>
</comment>
<comment type="pathway">
    <text evidence="1">Glycan biosynthesis; glycogen biosynthesis.</text>
</comment>
<comment type="subunit">
    <text evidence="1">Monomer.</text>
</comment>
<comment type="similarity">
    <text evidence="1">Belongs to the glycosyl hydrolase 13 family. GlgB subfamily.</text>
</comment>
<accession>B0B998</accession>